<feature type="chain" id="PRO_1000205976" description="Large ribosomal subunit protein eL31">
    <location>
        <begin position="1"/>
        <end position="88"/>
    </location>
</feature>
<evidence type="ECO:0000255" key="1">
    <source>
        <dbReference type="HAMAP-Rule" id="MF_00410"/>
    </source>
</evidence>
<evidence type="ECO:0000305" key="2"/>
<name>RL31_SACI3</name>
<reference key="1">
    <citation type="journal article" date="2009" name="Proc. Natl. Acad. Sci. U.S.A.">
        <title>Biogeography of the Sulfolobus islandicus pan-genome.</title>
        <authorList>
            <person name="Reno M.L."/>
            <person name="Held N.L."/>
            <person name="Fields C.J."/>
            <person name="Burke P.V."/>
            <person name="Whitaker R.J."/>
        </authorList>
    </citation>
    <scope>NUCLEOTIDE SEQUENCE [LARGE SCALE GENOMIC DNA]</scope>
    <source>
        <strain>M.16.27</strain>
    </source>
</reference>
<sequence length="88" mass="10048">MKEKDNFEMVINLRKIKTGKRTGRSKRAVKFVRKIVARHFNADKVVIDPLLAKSISKNGNDKVVSKVRVVVSKVGEKIYLVRLAIKSR</sequence>
<organism>
    <name type="scientific">Saccharolobus islandicus (strain M.16.27)</name>
    <name type="common">Sulfolobus islandicus</name>
    <dbReference type="NCBI Taxonomy" id="427318"/>
    <lineage>
        <taxon>Archaea</taxon>
        <taxon>Thermoproteota</taxon>
        <taxon>Thermoprotei</taxon>
        <taxon>Sulfolobales</taxon>
        <taxon>Sulfolobaceae</taxon>
        <taxon>Saccharolobus</taxon>
    </lineage>
</organism>
<gene>
    <name evidence="1" type="primary">rpl31e</name>
    <name type="ordered locus">M1627_1872</name>
</gene>
<proteinExistence type="inferred from homology"/>
<protein>
    <recommendedName>
        <fullName evidence="1">Large ribosomal subunit protein eL31</fullName>
    </recommendedName>
    <alternativeName>
        <fullName evidence="2">50S ribosomal protein L31e</fullName>
    </alternativeName>
</protein>
<dbReference type="EMBL" id="CP001401">
    <property type="protein sequence ID" value="ACP55744.1"/>
    <property type="molecule type" value="Genomic_DNA"/>
</dbReference>
<dbReference type="RefSeq" id="WP_012711730.1">
    <property type="nucleotide sequence ID" value="NC_012632.1"/>
</dbReference>
<dbReference type="SMR" id="C3MZB2"/>
<dbReference type="KEGG" id="sim:M1627_1872"/>
<dbReference type="HOGENOM" id="CLU_2461923_0_0_2"/>
<dbReference type="Proteomes" id="UP000002307">
    <property type="component" value="Chromosome"/>
</dbReference>
<dbReference type="GO" id="GO:1990904">
    <property type="term" value="C:ribonucleoprotein complex"/>
    <property type="evidence" value="ECO:0007669"/>
    <property type="project" value="UniProtKB-KW"/>
</dbReference>
<dbReference type="GO" id="GO:0005840">
    <property type="term" value="C:ribosome"/>
    <property type="evidence" value="ECO:0007669"/>
    <property type="project" value="UniProtKB-KW"/>
</dbReference>
<dbReference type="GO" id="GO:0003735">
    <property type="term" value="F:structural constituent of ribosome"/>
    <property type="evidence" value="ECO:0007669"/>
    <property type="project" value="InterPro"/>
</dbReference>
<dbReference type="GO" id="GO:0006412">
    <property type="term" value="P:translation"/>
    <property type="evidence" value="ECO:0007669"/>
    <property type="project" value="UniProtKB-UniRule"/>
</dbReference>
<dbReference type="Gene3D" id="3.10.440.10">
    <property type="match status" value="1"/>
</dbReference>
<dbReference type="HAMAP" id="MF_00410">
    <property type="entry name" value="Ribosomal_eL31"/>
    <property type="match status" value="1"/>
</dbReference>
<dbReference type="InterPro" id="IPR000054">
    <property type="entry name" value="Ribosomal_eL31"/>
</dbReference>
<dbReference type="InterPro" id="IPR023621">
    <property type="entry name" value="Ribosomal_eL31_dom_sf"/>
</dbReference>
<dbReference type="NCBIfam" id="NF002258">
    <property type="entry name" value="PRK01192.1-1"/>
    <property type="match status" value="1"/>
</dbReference>
<dbReference type="Pfam" id="PF01198">
    <property type="entry name" value="Ribosomal_L31e"/>
    <property type="match status" value="1"/>
</dbReference>
<dbReference type="SMART" id="SM01380">
    <property type="entry name" value="Ribosomal_L31e"/>
    <property type="match status" value="1"/>
</dbReference>
<dbReference type="SUPFAM" id="SSF54575">
    <property type="entry name" value="Ribosomal protein L31e"/>
    <property type="match status" value="1"/>
</dbReference>
<comment type="similarity">
    <text evidence="1">Belongs to the eukaryotic ribosomal protein eL31 family.</text>
</comment>
<accession>C3MZB2</accession>
<keyword id="KW-0687">Ribonucleoprotein</keyword>
<keyword id="KW-0689">Ribosomal protein</keyword>